<keyword id="KW-1185">Reference proteome</keyword>
<gene>
    <name type="primary">yrzR</name>
    <name type="ordered locus">BSU27469</name>
</gene>
<accession>C0H462</accession>
<protein>
    <recommendedName>
        <fullName>Uncharacterized protein YrzR</fullName>
    </recommendedName>
</protein>
<feature type="chain" id="PRO_0000382687" description="Uncharacterized protein YrzR">
    <location>
        <begin position="1"/>
        <end position="63"/>
    </location>
</feature>
<proteinExistence type="predicted"/>
<sequence>MLICPNCKSKDIGKIGVNQYYCWGCFIELTVAKGKIATHQVEEDGTLSSLDDLFSEDERSINF</sequence>
<name>YRZR_BACSU</name>
<dbReference type="EMBL" id="AL009126">
    <property type="protein sequence ID" value="CAX52673.1"/>
    <property type="molecule type" value="Genomic_DNA"/>
</dbReference>
<dbReference type="RefSeq" id="WP_003225893.1">
    <property type="nucleotide sequence ID" value="NZ_OZ025638.1"/>
</dbReference>
<dbReference type="RefSeq" id="YP_003097767.1">
    <property type="nucleotide sequence ID" value="NC_000964.3"/>
</dbReference>
<dbReference type="FunCoup" id="C0H462">
    <property type="interactions" value="92"/>
</dbReference>
<dbReference type="STRING" id="224308.BSU27469"/>
<dbReference type="PaxDb" id="224308-BSU27469"/>
<dbReference type="EnsemblBacteria" id="CAX52673">
    <property type="protein sequence ID" value="CAX52673"/>
    <property type="gene ID" value="BSU_27469"/>
</dbReference>
<dbReference type="GeneID" id="8302944"/>
<dbReference type="KEGG" id="bsu:BSU27469"/>
<dbReference type="PATRIC" id="fig|224308.179.peg.2984"/>
<dbReference type="eggNOG" id="ENOG5032ZSJ">
    <property type="taxonomic scope" value="Bacteria"/>
</dbReference>
<dbReference type="InParanoid" id="C0H462"/>
<dbReference type="OrthoDB" id="1798711at2"/>
<dbReference type="BioCyc" id="BSUB:BSU27469-MONOMER"/>
<dbReference type="PRO" id="PR:C0H462"/>
<dbReference type="Proteomes" id="UP000001570">
    <property type="component" value="Chromosome"/>
</dbReference>
<reference key="1">
    <citation type="journal article" date="1997" name="Nature">
        <title>The complete genome sequence of the Gram-positive bacterium Bacillus subtilis.</title>
        <authorList>
            <person name="Kunst F."/>
            <person name="Ogasawara N."/>
            <person name="Moszer I."/>
            <person name="Albertini A.M."/>
            <person name="Alloni G."/>
            <person name="Azevedo V."/>
            <person name="Bertero M.G."/>
            <person name="Bessieres P."/>
            <person name="Bolotin A."/>
            <person name="Borchert S."/>
            <person name="Borriss R."/>
            <person name="Boursier L."/>
            <person name="Brans A."/>
            <person name="Braun M."/>
            <person name="Brignell S.C."/>
            <person name="Bron S."/>
            <person name="Brouillet S."/>
            <person name="Bruschi C.V."/>
            <person name="Caldwell B."/>
            <person name="Capuano V."/>
            <person name="Carter N.M."/>
            <person name="Choi S.-K."/>
            <person name="Codani J.-J."/>
            <person name="Connerton I.F."/>
            <person name="Cummings N.J."/>
            <person name="Daniel R.A."/>
            <person name="Denizot F."/>
            <person name="Devine K.M."/>
            <person name="Duesterhoeft A."/>
            <person name="Ehrlich S.D."/>
            <person name="Emmerson P.T."/>
            <person name="Entian K.-D."/>
            <person name="Errington J."/>
            <person name="Fabret C."/>
            <person name="Ferrari E."/>
            <person name="Foulger D."/>
            <person name="Fritz C."/>
            <person name="Fujita M."/>
            <person name="Fujita Y."/>
            <person name="Fuma S."/>
            <person name="Galizzi A."/>
            <person name="Galleron N."/>
            <person name="Ghim S.-Y."/>
            <person name="Glaser P."/>
            <person name="Goffeau A."/>
            <person name="Golightly E.J."/>
            <person name="Grandi G."/>
            <person name="Guiseppi G."/>
            <person name="Guy B.J."/>
            <person name="Haga K."/>
            <person name="Haiech J."/>
            <person name="Harwood C.R."/>
            <person name="Henaut A."/>
            <person name="Hilbert H."/>
            <person name="Holsappel S."/>
            <person name="Hosono S."/>
            <person name="Hullo M.-F."/>
            <person name="Itaya M."/>
            <person name="Jones L.-M."/>
            <person name="Joris B."/>
            <person name="Karamata D."/>
            <person name="Kasahara Y."/>
            <person name="Klaerr-Blanchard M."/>
            <person name="Klein C."/>
            <person name="Kobayashi Y."/>
            <person name="Koetter P."/>
            <person name="Koningstein G."/>
            <person name="Krogh S."/>
            <person name="Kumano M."/>
            <person name="Kurita K."/>
            <person name="Lapidus A."/>
            <person name="Lardinois S."/>
            <person name="Lauber J."/>
            <person name="Lazarevic V."/>
            <person name="Lee S.-M."/>
            <person name="Levine A."/>
            <person name="Liu H."/>
            <person name="Masuda S."/>
            <person name="Mauel C."/>
            <person name="Medigue C."/>
            <person name="Medina N."/>
            <person name="Mellado R.P."/>
            <person name="Mizuno M."/>
            <person name="Moestl D."/>
            <person name="Nakai S."/>
            <person name="Noback M."/>
            <person name="Noone D."/>
            <person name="O'Reilly M."/>
            <person name="Ogawa K."/>
            <person name="Ogiwara A."/>
            <person name="Oudega B."/>
            <person name="Park S.-H."/>
            <person name="Parro V."/>
            <person name="Pohl T.M."/>
            <person name="Portetelle D."/>
            <person name="Porwollik S."/>
            <person name="Prescott A.M."/>
            <person name="Presecan E."/>
            <person name="Pujic P."/>
            <person name="Purnelle B."/>
            <person name="Rapoport G."/>
            <person name="Rey M."/>
            <person name="Reynolds S."/>
            <person name="Rieger M."/>
            <person name="Rivolta C."/>
            <person name="Rocha E."/>
            <person name="Roche B."/>
            <person name="Rose M."/>
            <person name="Sadaie Y."/>
            <person name="Sato T."/>
            <person name="Scanlan E."/>
            <person name="Schleich S."/>
            <person name="Schroeter R."/>
            <person name="Scoffone F."/>
            <person name="Sekiguchi J."/>
            <person name="Sekowska A."/>
            <person name="Seror S.J."/>
            <person name="Serror P."/>
            <person name="Shin B.-S."/>
            <person name="Soldo B."/>
            <person name="Sorokin A."/>
            <person name="Tacconi E."/>
            <person name="Takagi T."/>
            <person name="Takahashi H."/>
            <person name="Takemaru K."/>
            <person name="Takeuchi M."/>
            <person name="Tamakoshi A."/>
            <person name="Tanaka T."/>
            <person name="Terpstra P."/>
            <person name="Tognoni A."/>
            <person name="Tosato V."/>
            <person name="Uchiyama S."/>
            <person name="Vandenbol M."/>
            <person name="Vannier F."/>
            <person name="Vassarotti A."/>
            <person name="Viari A."/>
            <person name="Wambutt R."/>
            <person name="Wedler E."/>
            <person name="Wedler H."/>
            <person name="Weitzenegger T."/>
            <person name="Winters P."/>
            <person name="Wipat A."/>
            <person name="Yamamoto H."/>
            <person name="Yamane K."/>
            <person name="Yasumoto K."/>
            <person name="Yata K."/>
            <person name="Yoshida K."/>
            <person name="Yoshikawa H.-F."/>
            <person name="Zumstein E."/>
            <person name="Yoshikawa H."/>
            <person name="Danchin A."/>
        </authorList>
    </citation>
    <scope>NUCLEOTIDE SEQUENCE [LARGE SCALE GENOMIC DNA]</scope>
    <source>
        <strain>168</strain>
    </source>
</reference>
<organism>
    <name type="scientific">Bacillus subtilis (strain 168)</name>
    <dbReference type="NCBI Taxonomy" id="224308"/>
    <lineage>
        <taxon>Bacteria</taxon>
        <taxon>Bacillati</taxon>
        <taxon>Bacillota</taxon>
        <taxon>Bacilli</taxon>
        <taxon>Bacillales</taxon>
        <taxon>Bacillaceae</taxon>
        <taxon>Bacillus</taxon>
    </lineage>
</organism>